<gene>
    <name evidence="1" type="primary">eno</name>
    <name type="ordered locus">MARTH_orf859</name>
</gene>
<accession>B3PNH6</accession>
<proteinExistence type="inferred from homology"/>
<reference key="1">
    <citation type="journal article" date="2008" name="Infect. Immun.">
        <title>Genome of Mycoplasma arthritidis.</title>
        <authorList>
            <person name="Dybvig K."/>
            <person name="Zuhua C."/>
            <person name="Lao P."/>
            <person name="Jordan D.S."/>
            <person name="French C.T."/>
            <person name="Tu A.H."/>
            <person name="Loraine A.E."/>
        </authorList>
    </citation>
    <scope>NUCLEOTIDE SEQUENCE [LARGE SCALE GENOMIC DNA]</scope>
    <source>
        <strain>158L3-1</strain>
    </source>
</reference>
<evidence type="ECO:0000255" key="1">
    <source>
        <dbReference type="HAMAP-Rule" id="MF_00318"/>
    </source>
</evidence>
<dbReference type="EC" id="4.2.1.11" evidence="1"/>
<dbReference type="EMBL" id="CP001047">
    <property type="protein sequence ID" value="ACF07578.1"/>
    <property type="molecule type" value="Genomic_DNA"/>
</dbReference>
<dbReference type="RefSeq" id="WP_012498535.1">
    <property type="nucleotide sequence ID" value="NC_011025.1"/>
</dbReference>
<dbReference type="SMR" id="B3PNH6"/>
<dbReference type="STRING" id="243272.MARTH_orf859"/>
<dbReference type="KEGG" id="mat:MARTH_orf859"/>
<dbReference type="eggNOG" id="COG0148">
    <property type="taxonomic scope" value="Bacteria"/>
</dbReference>
<dbReference type="HOGENOM" id="CLU_031223_2_1_14"/>
<dbReference type="UniPathway" id="UPA00109">
    <property type="reaction ID" value="UER00187"/>
</dbReference>
<dbReference type="Proteomes" id="UP000008812">
    <property type="component" value="Chromosome"/>
</dbReference>
<dbReference type="GO" id="GO:0009986">
    <property type="term" value="C:cell surface"/>
    <property type="evidence" value="ECO:0007669"/>
    <property type="project" value="UniProtKB-SubCell"/>
</dbReference>
<dbReference type="GO" id="GO:0005576">
    <property type="term" value="C:extracellular region"/>
    <property type="evidence" value="ECO:0007669"/>
    <property type="project" value="UniProtKB-SubCell"/>
</dbReference>
<dbReference type="GO" id="GO:0000015">
    <property type="term" value="C:phosphopyruvate hydratase complex"/>
    <property type="evidence" value="ECO:0007669"/>
    <property type="project" value="InterPro"/>
</dbReference>
<dbReference type="GO" id="GO:0000287">
    <property type="term" value="F:magnesium ion binding"/>
    <property type="evidence" value="ECO:0007669"/>
    <property type="project" value="UniProtKB-UniRule"/>
</dbReference>
<dbReference type="GO" id="GO:0004634">
    <property type="term" value="F:phosphopyruvate hydratase activity"/>
    <property type="evidence" value="ECO:0007669"/>
    <property type="project" value="UniProtKB-UniRule"/>
</dbReference>
<dbReference type="GO" id="GO:0006096">
    <property type="term" value="P:glycolytic process"/>
    <property type="evidence" value="ECO:0007669"/>
    <property type="project" value="UniProtKB-UniRule"/>
</dbReference>
<dbReference type="CDD" id="cd03313">
    <property type="entry name" value="enolase"/>
    <property type="match status" value="1"/>
</dbReference>
<dbReference type="FunFam" id="3.30.390.10:FF:000001">
    <property type="entry name" value="Enolase"/>
    <property type="match status" value="1"/>
</dbReference>
<dbReference type="Gene3D" id="3.20.20.120">
    <property type="entry name" value="Enolase-like C-terminal domain"/>
    <property type="match status" value="1"/>
</dbReference>
<dbReference type="Gene3D" id="3.30.390.10">
    <property type="entry name" value="Enolase-like, N-terminal domain"/>
    <property type="match status" value="1"/>
</dbReference>
<dbReference type="HAMAP" id="MF_00318">
    <property type="entry name" value="Enolase"/>
    <property type="match status" value="1"/>
</dbReference>
<dbReference type="InterPro" id="IPR000941">
    <property type="entry name" value="Enolase"/>
</dbReference>
<dbReference type="InterPro" id="IPR036849">
    <property type="entry name" value="Enolase-like_C_sf"/>
</dbReference>
<dbReference type="InterPro" id="IPR029017">
    <property type="entry name" value="Enolase-like_N"/>
</dbReference>
<dbReference type="InterPro" id="IPR020810">
    <property type="entry name" value="Enolase_C"/>
</dbReference>
<dbReference type="InterPro" id="IPR020811">
    <property type="entry name" value="Enolase_N"/>
</dbReference>
<dbReference type="NCBIfam" id="TIGR01060">
    <property type="entry name" value="eno"/>
    <property type="match status" value="1"/>
</dbReference>
<dbReference type="PANTHER" id="PTHR11902">
    <property type="entry name" value="ENOLASE"/>
    <property type="match status" value="1"/>
</dbReference>
<dbReference type="PANTHER" id="PTHR11902:SF1">
    <property type="entry name" value="ENOLASE"/>
    <property type="match status" value="1"/>
</dbReference>
<dbReference type="Pfam" id="PF00113">
    <property type="entry name" value="Enolase_C"/>
    <property type="match status" value="1"/>
</dbReference>
<dbReference type="Pfam" id="PF03952">
    <property type="entry name" value="Enolase_N"/>
    <property type="match status" value="1"/>
</dbReference>
<dbReference type="PIRSF" id="PIRSF001400">
    <property type="entry name" value="Enolase"/>
    <property type="match status" value="1"/>
</dbReference>
<dbReference type="PRINTS" id="PR00148">
    <property type="entry name" value="ENOLASE"/>
</dbReference>
<dbReference type="SFLD" id="SFLDF00002">
    <property type="entry name" value="enolase"/>
    <property type="match status" value="1"/>
</dbReference>
<dbReference type="SFLD" id="SFLDG00178">
    <property type="entry name" value="enolase"/>
    <property type="match status" value="1"/>
</dbReference>
<dbReference type="SMART" id="SM01192">
    <property type="entry name" value="Enolase_C"/>
    <property type="match status" value="1"/>
</dbReference>
<dbReference type="SMART" id="SM01193">
    <property type="entry name" value="Enolase_N"/>
    <property type="match status" value="1"/>
</dbReference>
<dbReference type="SUPFAM" id="SSF51604">
    <property type="entry name" value="Enolase C-terminal domain-like"/>
    <property type="match status" value="1"/>
</dbReference>
<dbReference type="SUPFAM" id="SSF54826">
    <property type="entry name" value="Enolase N-terminal domain-like"/>
    <property type="match status" value="1"/>
</dbReference>
<name>ENO_META1</name>
<protein>
    <recommendedName>
        <fullName evidence="1">Enolase</fullName>
        <ecNumber evidence="1">4.2.1.11</ecNumber>
    </recommendedName>
    <alternativeName>
        <fullName evidence="1">2-phospho-D-glycerate hydro-lyase</fullName>
    </alternativeName>
    <alternativeName>
        <fullName evidence="1">2-phosphoglycerate dehydratase</fullName>
    </alternativeName>
</protein>
<organism>
    <name type="scientific">Metamycoplasma arthritidis (strain 158L3-1)</name>
    <name type="common">Mycoplasma arthritidis</name>
    <dbReference type="NCBI Taxonomy" id="243272"/>
    <lineage>
        <taxon>Bacteria</taxon>
        <taxon>Bacillati</taxon>
        <taxon>Mycoplasmatota</taxon>
        <taxon>Mycoplasmoidales</taxon>
        <taxon>Metamycoplasmataceae</taxon>
        <taxon>Metamycoplasma</taxon>
    </lineage>
</organism>
<sequence length="456" mass="50403">MSKIVSINAYEVLDSRGNPTVKVELTTEKAYAEALVPSGASTGSKEALELRDKGTKYEKNWFGGKGVQTAVDNVNEIIFPALKGKDVTKQFEIDKLMIELDGTETKSKLGANAILAVSLAVAKAAANEANVPLYAYLAKLDNRQAYKLPVPMLNVINGGEHASNTIDFQEFMIMPLGAKTFKEAMQIANFVFHTLAKLLKEAGHGTQVGDEGGFAPNLHTHEETLDFLVNAIKKAGYNPATSGDNAVAICLDTASSELYCSESKTYTFKKFKKALDEKRPGFEKYASMKYKFTSDEYVEYYGNLIAKYPIISIEDSHDENDWEGFRKMKKLYGNRVQLVGDDLIVTNPKYIKMAIEKDAINASLIKINQIGSLWETIEAIKMTQAANMVPVISHRSGETEDTFIADLAVAFNTGEIKTGSLSRTDRIAKYNRLLKIEQELGNKAKYEGRASFSNLK</sequence>
<keyword id="KW-0963">Cytoplasm</keyword>
<keyword id="KW-0324">Glycolysis</keyword>
<keyword id="KW-0456">Lyase</keyword>
<keyword id="KW-0460">Magnesium</keyword>
<keyword id="KW-0479">Metal-binding</keyword>
<keyword id="KW-1185">Reference proteome</keyword>
<keyword id="KW-0964">Secreted</keyword>
<feature type="chain" id="PRO_1000115886" description="Enolase">
    <location>
        <begin position="1"/>
        <end position="456"/>
    </location>
</feature>
<feature type="active site" description="Proton donor" evidence="1">
    <location>
        <position position="211"/>
    </location>
</feature>
<feature type="active site" description="Proton acceptor" evidence="1">
    <location>
        <position position="366"/>
    </location>
</feature>
<feature type="binding site" evidence="1">
    <location>
        <position position="169"/>
    </location>
    <ligand>
        <name>(2R)-2-phosphoglycerate</name>
        <dbReference type="ChEBI" id="CHEBI:58289"/>
    </ligand>
</feature>
<feature type="binding site" evidence="1">
    <location>
        <position position="252"/>
    </location>
    <ligand>
        <name>Mg(2+)</name>
        <dbReference type="ChEBI" id="CHEBI:18420"/>
    </ligand>
</feature>
<feature type="binding site" evidence="1">
    <location>
        <position position="314"/>
    </location>
    <ligand>
        <name>Mg(2+)</name>
        <dbReference type="ChEBI" id="CHEBI:18420"/>
    </ligand>
</feature>
<feature type="binding site" evidence="1">
    <location>
        <position position="341"/>
    </location>
    <ligand>
        <name>Mg(2+)</name>
        <dbReference type="ChEBI" id="CHEBI:18420"/>
    </ligand>
</feature>
<feature type="binding site" evidence="1">
    <location>
        <position position="366"/>
    </location>
    <ligand>
        <name>(2R)-2-phosphoglycerate</name>
        <dbReference type="ChEBI" id="CHEBI:58289"/>
    </ligand>
</feature>
<feature type="binding site" evidence="1">
    <location>
        <position position="395"/>
    </location>
    <ligand>
        <name>(2R)-2-phosphoglycerate</name>
        <dbReference type="ChEBI" id="CHEBI:58289"/>
    </ligand>
</feature>
<feature type="binding site" evidence="1">
    <location>
        <position position="396"/>
    </location>
    <ligand>
        <name>(2R)-2-phosphoglycerate</name>
        <dbReference type="ChEBI" id="CHEBI:58289"/>
    </ligand>
</feature>
<feature type="binding site" evidence="1">
    <location>
        <position position="417"/>
    </location>
    <ligand>
        <name>(2R)-2-phosphoglycerate</name>
        <dbReference type="ChEBI" id="CHEBI:58289"/>
    </ligand>
</feature>
<comment type="function">
    <text evidence="1">Catalyzes the reversible conversion of 2-phosphoglycerate (2-PG) into phosphoenolpyruvate (PEP). It is essential for the degradation of carbohydrates via glycolysis.</text>
</comment>
<comment type="catalytic activity">
    <reaction evidence="1">
        <text>(2R)-2-phosphoglycerate = phosphoenolpyruvate + H2O</text>
        <dbReference type="Rhea" id="RHEA:10164"/>
        <dbReference type="ChEBI" id="CHEBI:15377"/>
        <dbReference type="ChEBI" id="CHEBI:58289"/>
        <dbReference type="ChEBI" id="CHEBI:58702"/>
        <dbReference type="EC" id="4.2.1.11"/>
    </reaction>
</comment>
<comment type="cofactor">
    <cofactor evidence="1">
        <name>Mg(2+)</name>
        <dbReference type="ChEBI" id="CHEBI:18420"/>
    </cofactor>
    <text evidence="1">Binds a second Mg(2+) ion via substrate during catalysis.</text>
</comment>
<comment type="pathway">
    <text evidence="1">Carbohydrate degradation; glycolysis; pyruvate from D-glyceraldehyde 3-phosphate: step 4/5.</text>
</comment>
<comment type="subcellular location">
    <subcellularLocation>
        <location evidence="1">Cytoplasm</location>
    </subcellularLocation>
    <subcellularLocation>
        <location evidence="1">Secreted</location>
    </subcellularLocation>
    <subcellularLocation>
        <location evidence="1">Cell surface</location>
    </subcellularLocation>
    <text evidence="1">Fractions of enolase are present in both the cytoplasm and on the cell surface.</text>
</comment>
<comment type="similarity">
    <text evidence="1">Belongs to the enolase family.</text>
</comment>